<feature type="chain" id="PRO_0000239454" description="Clusterin-associated protein 1">
    <location>
        <begin position="1"/>
        <end position="402"/>
    </location>
</feature>
<feature type="region of interest" description="Disordered" evidence="4">
    <location>
        <begin position="292"/>
        <end position="402"/>
    </location>
</feature>
<feature type="coiled-coil region" evidence="3">
    <location>
        <begin position="187"/>
        <end position="297"/>
    </location>
</feature>
<feature type="compositionally biased region" description="Acidic residues" evidence="4">
    <location>
        <begin position="301"/>
        <end position="317"/>
    </location>
</feature>
<feature type="compositionally biased region" description="Acidic residues" evidence="4">
    <location>
        <begin position="349"/>
        <end position="377"/>
    </location>
</feature>
<feature type="modified residue" description="Phosphoserine" evidence="6">
    <location>
        <position position="303"/>
    </location>
</feature>
<feature type="modified residue" description="Phosphoserine" evidence="1">
    <location>
        <position position="313"/>
    </location>
</feature>
<feature type="modified residue" description="Phosphoserine" evidence="1">
    <location>
        <position position="315"/>
    </location>
</feature>
<feature type="modified residue" description="Phosphoserine" evidence="6">
    <location>
        <position position="398"/>
    </location>
</feature>
<dbReference type="EMBL" id="BC079022">
    <property type="protein sequence ID" value="AAH79022.1"/>
    <property type="molecule type" value="mRNA"/>
</dbReference>
<dbReference type="RefSeq" id="NP_001014247.1">
    <property type="nucleotide sequence ID" value="NM_001014225.1"/>
</dbReference>
<dbReference type="RefSeq" id="XP_063125553.1">
    <property type="nucleotide sequence ID" value="XM_063269483.1"/>
</dbReference>
<dbReference type="RefSeq" id="XP_063125554.1">
    <property type="nucleotide sequence ID" value="XM_063269484.1"/>
</dbReference>
<dbReference type="RefSeq" id="XP_063125555.1">
    <property type="nucleotide sequence ID" value="XM_063269485.1"/>
</dbReference>
<dbReference type="SMR" id="Q6AYJ5"/>
<dbReference type="FunCoup" id="Q6AYJ5">
    <property type="interactions" value="1903"/>
</dbReference>
<dbReference type="STRING" id="10116.ENSRNOP00000071678"/>
<dbReference type="iPTMnet" id="Q6AYJ5"/>
<dbReference type="PhosphoSitePlus" id="Q6AYJ5"/>
<dbReference type="PaxDb" id="10116-ENSRNOP00000062395"/>
<dbReference type="Ensembl" id="ENSRNOT00000064964.3">
    <property type="protein sequence ID" value="ENSRNOP00000062395.1"/>
    <property type="gene ID" value="ENSRNOG00000007117.7"/>
</dbReference>
<dbReference type="GeneID" id="363544"/>
<dbReference type="UCSC" id="RGD:1359189">
    <property type="organism name" value="rat"/>
</dbReference>
<dbReference type="AGR" id="RGD:1359189"/>
<dbReference type="CTD" id="23059"/>
<dbReference type="RGD" id="1359189">
    <property type="gene designation" value="Cluap1"/>
</dbReference>
<dbReference type="eggNOG" id="KOG3647">
    <property type="taxonomic scope" value="Eukaryota"/>
</dbReference>
<dbReference type="GeneTree" id="ENSGT00390000008957"/>
<dbReference type="InParanoid" id="Q6AYJ5"/>
<dbReference type="OMA" id="RIRPAHM"/>
<dbReference type="PhylomeDB" id="Q6AYJ5"/>
<dbReference type="Reactome" id="R-RNO-5620924">
    <property type="pathway name" value="Intraflagellar transport"/>
</dbReference>
<dbReference type="PRO" id="PR:Q6AYJ5"/>
<dbReference type="Proteomes" id="UP000002494">
    <property type="component" value="Chromosome 10"/>
</dbReference>
<dbReference type="Bgee" id="ENSRNOG00000007117">
    <property type="expression patterns" value="Expressed in testis and 20 other cell types or tissues"/>
</dbReference>
<dbReference type="ExpressionAtlas" id="Q6AYJ5">
    <property type="expression patterns" value="baseline and differential"/>
</dbReference>
<dbReference type="GO" id="GO:0005813">
    <property type="term" value="C:centrosome"/>
    <property type="evidence" value="ECO:0000266"/>
    <property type="project" value="RGD"/>
</dbReference>
<dbReference type="GO" id="GO:0097546">
    <property type="term" value="C:ciliary base"/>
    <property type="evidence" value="ECO:0000266"/>
    <property type="project" value="RGD"/>
</dbReference>
<dbReference type="GO" id="GO:0097542">
    <property type="term" value="C:ciliary tip"/>
    <property type="evidence" value="ECO:0000266"/>
    <property type="project" value="RGD"/>
</dbReference>
<dbReference type="GO" id="GO:0005929">
    <property type="term" value="C:cilium"/>
    <property type="evidence" value="ECO:0000266"/>
    <property type="project" value="RGD"/>
</dbReference>
<dbReference type="GO" id="GO:0030991">
    <property type="term" value="C:intraciliary transport particle A"/>
    <property type="evidence" value="ECO:0000266"/>
    <property type="project" value="RGD"/>
</dbReference>
<dbReference type="GO" id="GO:0030992">
    <property type="term" value="C:intraciliary transport particle B"/>
    <property type="evidence" value="ECO:0000266"/>
    <property type="project" value="RGD"/>
</dbReference>
<dbReference type="GO" id="GO:0005815">
    <property type="term" value="C:microtubule organizing center"/>
    <property type="evidence" value="ECO:0000318"/>
    <property type="project" value="GO_Central"/>
</dbReference>
<dbReference type="GO" id="GO:0005634">
    <property type="term" value="C:nucleus"/>
    <property type="evidence" value="ECO:0007669"/>
    <property type="project" value="UniProtKB-SubCell"/>
</dbReference>
<dbReference type="GO" id="GO:0035082">
    <property type="term" value="P:axoneme assembly"/>
    <property type="evidence" value="ECO:0000266"/>
    <property type="project" value="RGD"/>
</dbReference>
<dbReference type="GO" id="GO:0060271">
    <property type="term" value="P:cilium assembly"/>
    <property type="evidence" value="ECO:0000266"/>
    <property type="project" value="RGD"/>
</dbReference>
<dbReference type="GO" id="GO:0021508">
    <property type="term" value="P:floor plate formation"/>
    <property type="evidence" value="ECO:0000266"/>
    <property type="project" value="RGD"/>
</dbReference>
<dbReference type="GO" id="GO:0001947">
    <property type="term" value="P:heart looping"/>
    <property type="evidence" value="ECO:0000266"/>
    <property type="project" value="RGD"/>
</dbReference>
<dbReference type="GO" id="GO:0060972">
    <property type="term" value="P:left/right pattern formation"/>
    <property type="evidence" value="ECO:0000266"/>
    <property type="project" value="RGD"/>
</dbReference>
<dbReference type="GO" id="GO:0001843">
    <property type="term" value="P:neural tube closure"/>
    <property type="evidence" value="ECO:0000266"/>
    <property type="project" value="RGD"/>
</dbReference>
<dbReference type="GO" id="GO:0007224">
    <property type="term" value="P:smoothened signaling pathway"/>
    <property type="evidence" value="ECO:0000266"/>
    <property type="project" value="RGD"/>
</dbReference>
<dbReference type="InterPro" id="IPR019366">
    <property type="entry name" value="Clusterin-associated_protein-1"/>
</dbReference>
<dbReference type="PANTHER" id="PTHR21547">
    <property type="entry name" value="CLUSTERIN ASSOCIATED PROTEIN 1"/>
    <property type="match status" value="1"/>
</dbReference>
<dbReference type="PANTHER" id="PTHR21547:SF0">
    <property type="entry name" value="CLUSTERIN-ASSOCIATED PROTEIN 1"/>
    <property type="match status" value="1"/>
</dbReference>
<dbReference type="Pfam" id="PF10234">
    <property type="entry name" value="Cluap1"/>
    <property type="match status" value="1"/>
</dbReference>
<reference key="1">
    <citation type="journal article" date="2004" name="Genome Res.">
        <title>The status, quality, and expansion of the NIH full-length cDNA project: the Mammalian Gene Collection (MGC).</title>
        <authorList>
            <consortium name="The MGC Project Team"/>
        </authorList>
    </citation>
    <scope>NUCLEOTIDE SEQUENCE [LARGE SCALE MRNA]</scope>
    <source>
        <tissue>Testis</tissue>
    </source>
</reference>
<reference key="2">
    <citation type="journal article" date="2012" name="Nat. Commun.">
        <title>Quantitative maps of protein phosphorylation sites across 14 different rat organs and tissues.</title>
        <authorList>
            <person name="Lundby A."/>
            <person name="Secher A."/>
            <person name="Lage K."/>
            <person name="Nordsborg N.B."/>
            <person name="Dmytriyev A."/>
            <person name="Lundby C."/>
            <person name="Olsen J.V."/>
        </authorList>
    </citation>
    <scope>PHOSPHORYLATION [LARGE SCALE ANALYSIS] AT SER-303 AND SER-398</scope>
    <scope>IDENTIFICATION BY MASS SPECTROMETRY [LARGE SCALE ANALYSIS]</scope>
</reference>
<gene>
    <name type="primary">Cluap1</name>
</gene>
<keyword id="KW-0966">Cell projection</keyword>
<keyword id="KW-0969">Cilium</keyword>
<keyword id="KW-0970">Cilium biogenesis/degradation</keyword>
<keyword id="KW-0175">Coiled coil</keyword>
<keyword id="KW-0539">Nucleus</keyword>
<keyword id="KW-0597">Phosphoprotein</keyword>
<keyword id="KW-1185">Reference proteome</keyword>
<evidence type="ECO:0000250" key="1">
    <source>
        <dbReference type="UniProtKB" id="Q8R3P7"/>
    </source>
</evidence>
<evidence type="ECO:0000250" key="2">
    <source>
        <dbReference type="UniProtKB" id="Q96AJ1"/>
    </source>
</evidence>
<evidence type="ECO:0000255" key="3"/>
<evidence type="ECO:0000256" key="4">
    <source>
        <dbReference type="SAM" id="MobiDB-lite"/>
    </source>
</evidence>
<evidence type="ECO:0000305" key="5"/>
<evidence type="ECO:0007744" key="6">
    <source>
    </source>
</evidence>
<name>CLUA1_RAT</name>
<protein>
    <recommendedName>
        <fullName>Clusterin-associated protein 1</fullName>
    </recommendedName>
</protein>
<proteinExistence type="evidence at protein level"/>
<comment type="function">
    <text evidence="1">Required for cilia biogenesis. Appears to function within the multiple intraflagellar transport complex B (IFT-B). Key regulator of hedgehog signaling.</text>
</comment>
<comment type="subunit">
    <text evidence="2">Interacts with CLU/clusterin. Interacts with UBXN10; the interaction is direct.</text>
</comment>
<comment type="subcellular location">
    <subcellularLocation>
        <location evidence="2">Cell projection</location>
        <location evidence="2">Cilium</location>
    </subcellularLocation>
    <subcellularLocation>
        <location evidence="2">Nucleus</location>
    </subcellularLocation>
</comment>
<comment type="similarity">
    <text evidence="5">Belongs to the CLUAP1 family.</text>
</comment>
<sequence>MMRALGYPRHISMENFRTPNFGLVSEVLLWLVKRYEPQTDIPSDTETEQDRVFFIKAIAQFMATKAHIKLNTKKLYQADGYAVKELLKITSVLYNAMKTKGMEGSNVGEEDISKFKFDLGSKIADLKAARQLASEITAKGASLYDLLGKEVELRELRTEAIARPLEINETEKVMRIAIKDILAQVQKTKDLLNNVASDEANLEAKIEKRKLELERNRKRLQTLQSVRPAFMDEYEKVEEELQKQYDVYLEKFRNLAYLEQQLEDHHRMEQERFEEAENTLRLMQNKLKEEEKRLLKSGSNDDSDIDIQEDDESDSELEDRRLSKPRTAMEVLMQGRPSKRIVGTMQGGDSDEDEDSEDSEMNMEDDEEDDDDLEDESIALSPAKPSRRVRKPEPLDESDNDF</sequence>
<accession>Q6AYJ5</accession>
<organism>
    <name type="scientific">Rattus norvegicus</name>
    <name type="common">Rat</name>
    <dbReference type="NCBI Taxonomy" id="10116"/>
    <lineage>
        <taxon>Eukaryota</taxon>
        <taxon>Metazoa</taxon>
        <taxon>Chordata</taxon>
        <taxon>Craniata</taxon>
        <taxon>Vertebrata</taxon>
        <taxon>Euteleostomi</taxon>
        <taxon>Mammalia</taxon>
        <taxon>Eutheria</taxon>
        <taxon>Euarchontoglires</taxon>
        <taxon>Glires</taxon>
        <taxon>Rodentia</taxon>
        <taxon>Myomorpha</taxon>
        <taxon>Muroidea</taxon>
        <taxon>Muridae</taxon>
        <taxon>Murinae</taxon>
        <taxon>Rattus</taxon>
    </lineage>
</organism>